<comment type="function">
    <text evidence="1 3 7">Cytoplasmic retinol-binding protein (PubMed:12850148, PubMed:7683727). Accepts retinol from the transport protein STRA6, and thereby contributes to retinol uptake, storage and retinoid homeostasis (By similarity).</text>
</comment>
<comment type="subunit">
    <text evidence="1">Interacts (only as retinol-free apoprotein) with STRA6.</text>
</comment>
<comment type="subcellular location">
    <subcellularLocation>
        <location evidence="2">Cytoplasm</location>
    </subcellularLocation>
    <subcellularLocation>
        <location evidence="2">Lipid droplet</location>
    </subcellularLocation>
</comment>
<comment type="domain">
    <text evidence="3 7">Forms a beta-barrel structure that accommodates hydrophobic ligands in its interior.</text>
</comment>
<comment type="similarity">
    <text evidence="8">Belongs to the calycin superfamily. Fatty-acid binding protein (FABP) family.</text>
</comment>
<keyword id="KW-0002">3D-structure</keyword>
<keyword id="KW-0963">Cytoplasm</keyword>
<keyword id="KW-0903">Direct protein sequencing</keyword>
<keyword id="KW-0551">Lipid droplet</keyword>
<keyword id="KW-1185">Reference proteome</keyword>
<keyword id="KW-0683">Retinol-binding</keyword>
<keyword id="KW-0813">Transport</keyword>
<keyword id="KW-0845">Vitamin A</keyword>
<organism>
    <name type="scientific">Rattus norvegicus</name>
    <name type="common">Rat</name>
    <dbReference type="NCBI Taxonomy" id="10116"/>
    <lineage>
        <taxon>Eukaryota</taxon>
        <taxon>Metazoa</taxon>
        <taxon>Chordata</taxon>
        <taxon>Craniata</taxon>
        <taxon>Vertebrata</taxon>
        <taxon>Euteleostomi</taxon>
        <taxon>Mammalia</taxon>
        <taxon>Eutheria</taxon>
        <taxon>Euarchontoglires</taxon>
        <taxon>Glires</taxon>
        <taxon>Rodentia</taxon>
        <taxon>Myomorpha</taxon>
        <taxon>Muroidea</taxon>
        <taxon>Muridae</taxon>
        <taxon>Murinae</taxon>
        <taxon>Rattus</taxon>
    </lineage>
</organism>
<dbReference type="EMBL" id="M16459">
    <property type="protein sequence ID" value="AAA42021.1"/>
    <property type="molecule type" value="mRNA"/>
</dbReference>
<dbReference type="EMBL" id="M19257">
    <property type="protein sequence ID" value="AAA40962.1"/>
    <property type="molecule type" value="mRNA"/>
</dbReference>
<dbReference type="PIR" id="A29570">
    <property type="entry name" value="RJRTO"/>
</dbReference>
<dbReference type="RefSeq" id="NP_036865.1">
    <property type="nucleotide sequence ID" value="NM_012733.5"/>
</dbReference>
<dbReference type="PDB" id="1CRB">
    <property type="method" value="X-ray"/>
    <property type="resolution" value="2.10 A"/>
    <property type="chains" value="A=2-135"/>
</dbReference>
<dbReference type="PDB" id="1JBH">
    <property type="method" value="NMR"/>
    <property type="chains" value="A=1-135"/>
</dbReference>
<dbReference type="PDB" id="1KGL">
    <property type="method" value="NMR"/>
    <property type="chains" value="A=1-135"/>
</dbReference>
<dbReference type="PDB" id="1MX7">
    <property type="method" value="NMR"/>
    <property type="chains" value="A=2-135"/>
</dbReference>
<dbReference type="PDB" id="1MX8">
    <property type="method" value="NMR"/>
    <property type="chains" value="A=2-135"/>
</dbReference>
<dbReference type="PDBsum" id="1CRB"/>
<dbReference type="PDBsum" id="1JBH"/>
<dbReference type="PDBsum" id="1KGL"/>
<dbReference type="PDBsum" id="1MX7"/>
<dbReference type="PDBsum" id="1MX8"/>
<dbReference type="BMRB" id="P02696"/>
<dbReference type="SMR" id="P02696"/>
<dbReference type="FunCoup" id="P02696">
    <property type="interactions" value="73"/>
</dbReference>
<dbReference type="STRING" id="10116.ENSRNOP00000018622"/>
<dbReference type="iPTMnet" id="P02696"/>
<dbReference type="PhosphoSitePlus" id="P02696"/>
<dbReference type="PaxDb" id="10116-ENSRNOP00000018622"/>
<dbReference type="Ensembl" id="ENSRNOT00000018622.5">
    <property type="protein sequence ID" value="ENSRNOP00000018622.2"/>
    <property type="gene ID" value="ENSRNOG00000013794.5"/>
</dbReference>
<dbReference type="GeneID" id="25056"/>
<dbReference type="KEGG" id="rno:25056"/>
<dbReference type="UCSC" id="RGD:3543">
    <property type="organism name" value="rat"/>
</dbReference>
<dbReference type="AGR" id="RGD:3543"/>
<dbReference type="CTD" id="5947"/>
<dbReference type="RGD" id="3543">
    <property type="gene designation" value="Rbp1"/>
</dbReference>
<dbReference type="eggNOG" id="KOG4015">
    <property type="taxonomic scope" value="Eukaryota"/>
</dbReference>
<dbReference type="GeneTree" id="ENSGT00940000159675"/>
<dbReference type="HOGENOM" id="CLU_113772_5_1_1"/>
<dbReference type="InParanoid" id="P02696"/>
<dbReference type="OMA" id="DRKCMTC"/>
<dbReference type="OrthoDB" id="354351at2759"/>
<dbReference type="PhylomeDB" id="P02696"/>
<dbReference type="TreeFam" id="TF316894"/>
<dbReference type="Reactome" id="R-RNO-2453902">
    <property type="pathway name" value="The canonical retinoid cycle in rods (twilight vision)"/>
</dbReference>
<dbReference type="Reactome" id="R-RNO-975634">
    <property type="pathway name" value="Retinoid metabolism and transport"/>
</dbReference>
<dbReference type="EvolutionaryTrace" id="P02696"/>
<dbReference type="PRO" id="PR:P02696"/>
<dbReference type="Proteomes" id="UP000002494">
    <property type="component" value="Chromosome 8"/>
</dbReference>
<dbReference type="Bgee" id="ENSRNOG00000013794">
    <property type="expression patterns" value="Expressed in liver and 19 other cell types or tissues"/>
</dbReference>
<dbReference type="GO" id="GO:0044297">
    <property type="term" value="C:cell body"/>
    <property type="evidence" value="ECO:0000314"/>
    <property type="project" value="RGD"/>
</dbReference>
<dbReference type="GO" id="GO:0005829">
    <property type="term" value="C:cytosol"/>
    <property type="evidence" value="ECO:0000318"/>
    <property type="project" value="GO_Central"/>
</dbReference>
<dbReference type="GO" id="GO:0005811">
    <property type="term" value="C:lipid droplet"/>
    <property type="evidence" value="ECO:0000250"/>
    <property type="project" value="UniProtKB"/>
</dbReference>
<dbReference type="GO" id="GO:0005634">
    <property type="term" value="C:nucleus"/>
    <property type="evidence" value="ECO:0000318"/>
    <property type="project" value="GO_Central"/>
</dbReference>
<dbReference type="GO" id="GO:1904768">
    <property type="term" value="F:all-trans-retinol binding"/>
    <property type="evidence" value="ECO:0000250"/>
    <property type="project" value="UniProtKB"/>
</dbReference>
<dbReference type="GO" id="GO:0005504">
    <property type="term" value="F:fatty acid binding"/>
    <property type="evidence" value="ECO:0000318"/>
    <property type="project" value="GO_Central"/>
</dbReference>
<dbReference type="GO" id="GO:0016918">
    <property type="term" value="F:retinal binding"/>
    <property type="evidence" value="ECO:0007669"/>
    <property type="project" value="UniProtKB-KW"/>
</dbReference>
<dbReference type="GO" id="GO:0019841">
    <property type="term" value="F:retinol binding"/>
    <property type="evidence" value="ECO:0000314"/>
    <property type="project" value="RGD"/>
</dbReference>
<dbReference type="GO" id="GO:0015908">
    <property type="term" value="P:fatty acid transport"/>
    <property type="evidence" value="ECO:0000318"/>
    <property type="project" value="GO_Central"/>
</dbReference>
<dbReference type="GO" id="GO:0055088">
    <property type="term" value="P:lipid homeostasis"/>
    <property type="evidence" value="ECO:0000250"/>
    <property type="project" value="UniProtKB"/>
</dbReference>
<dbReference type="GO" id="GO:0019915">
    <property type="term" value="P:lipid storage"/>
    <property type="evidence" value="ECO:0000266"/>
    <property type="project" value="RGD"/>
</dbReference>
<dbReference type="GO" id="GO:0051651">
    <property type="term" value="P:maintenance of location in cell"/>
    <property type="evidence" value="ECO:0000266"/>
    <property type="project" value="RGD"/>
</dbReference>
<dbReference type="GO" id="GO:0030852">
    <property type="term" value="P:regulation of granulocyte differentiation"/>
    <property type="evidence" value="ECO:0000266"/>
    <property type="project" value="RGD"/>
</dbReference>
<dbReference type="GO" id="GO:0080021">
    <property type="term" value="P:response to benzoic acid"/>
    <property type="evidence" value="ECO:0000270"/>
    <property type="project" value="RGD"/>
</dbReference>
<dbReference type="GO" id="GO:0032526">
    <property type="term" value="P:response to retinoic acid"/>
    <property type="evidence" value="ECO:0000270"/>
    <property type="project" value="RGD"/>
</dbReference>
<dbReference type="GO" id="GO:0033189">
    <property type="term" value="P:response to vitamin A"/>
    <property type="evidence" value="ECO:0000266"/>
    <property type="project" value="RGD"/>
</dbReference>
<dbReference type="GO" id="GO:0002138">
    <property type="term" value="P:retinoic acid biosynthetic process"/>
    <property type="evidence" value="ECO:0000270"/>
    <property type="project" value="RGD"/>
</dbReference>
<dbReference type="GO" id="GO:0042573">
    <property type="term" value="P:retinoic acid metabolic process"/>
    <property type="evidence" value="ECO:0000266"/>
    <property type="project" value="RGD"/>
</dbReference>
<dbReference type="GO" id="GO:0001523">
    <property type="term" value="P:retinoid metabolic process"/>
    <property type="evidence" value="ECO:0000266"/>
    <property type="project" value="RGD"/>
</dbReference>
<dbReference type="GO" id="GO:0042572">
    <property type="term" value="P:retinol metabolic process"/>
    <property type="evidence" value="ECO:0000314"/>
    <property type="project" value="RGD"/>
</dbReference>
<dbReference type="GO" id="GO:0006776">
    <property type="term" value="P:vitamin A metabolic process"/>
    <property type="evidence" value="ECO:0000250"/>
    <property type="project" value="UniProtKB"/>
</dbReference>
<dbReference type="CDD" id="cd19462">
    <property type="entry name" value="CRBP1"/>
    <property type="match status" value="1"/>
</dbReference>
<dbReference type="FunFam" id="2.40.128.20:FF:000001">
    <property type="entry name" value="Fatty acid-binding protein, adipocyte"/>
    <property type="match status" value="1"/>
</dbReference>
<dbReference type="Gene3D" id="2.40.128.20">
    <property type="match status" value="1"/>
</dbReference>
<dbReference type="InterPro" id="IPR012674">
    <property type="entry name" value="Calycin"/>
</dbReference>
<dbReference type="InterPro" id="IPR031264">
    <property type="entry name" value="CRBP1"/>
</dbReference>
<dbReference type="InterPro" id="IPR000463">
    <property type="entry name" value="Fatty_acid-bd"/>
</dbReference>
<dbReference type="InterPro" id="IPR031259">
    <property type="entry name" value="ILBP"/>
</dbReference>
<dbReference type="InterPro" id="IPR000566">
    <property type="entry name" value="Lipocln_cytosolic_FA-bd_dom"/>
</dbReference>
<dbReference type="PANTHER" id="PTHR11955">
    <property type="entry name" value="FATTY ACID BINDING PROTEIN"/>
    <property type="match status" value="1"/>
</dbReference>
<dbReference type="Pfam" id="PF00061">
    <property type="entry name" value="Lipocalin"/>
    <property type="match status" value="1"/>
</dbReference>
<dbReference type="PRINTS" id="PR00178">
    <property type="entry name" value="FATTYACIDBP"/>
</dbReference>
<dbReference type="SUPFAM" id="SSF50814">
    <property type="entry name" value="Lipocalins"/>
    <property type="match status" value="1"/>
</dbReference>
<dbReference type="PROSITE" id="PS00214">
    <property type="entry name" value="FABP"/>
    <property type="match status" value="1"/>
</dbReference>
<protein>
    <recommendedName>
        <fullName>Retinol-binding protein 1</fullName>
    </recommendedName>
    <alternativeName>
        <fullName>Cellular retinol-binding protein</fullName>
        <shortName>CRBP</shortName>
    </alternativeName>
    <alternativeName>
        <fullName>Cellular retinol-binding protein I</fullName>
        <shortName>CRBP-I</shortName>
    </alternativeName>
</protein>
<accession>P02696</accession>
<proteinExistence type="evidence at protein level"/>
<reference key="1">
    <citation type="journal article" date="1987" name="Proc. Natl. Acad. Sci. U.S.A.">
        <title>Rat cellular retinol-binding protein: cDNA sequence and rapid retinol-dependent accumulation of mRNA.</title>
        <authorList>
            <person name="Sherman D.R."/>
            <person name="Lloyd R.S."/>
            <person name="Chytil F."/>
        </authorList>
    </citation>
    <scope>NUCLEOTIDE SEQUENCE [MRNA]</scope>
</reference>
<reference key="2">
    <citation type="journal article" date="1987" name="J. Biol. Chem.">
        <title>Comparison of the tissue-specific expression and developmental regulation of two closely linked rodent genes encoding cytosolic retinol-binding proteins.</title>
        <authorList>
            <person name="Levin M.S."/>
            <person name="Li E."/>
            <person name="Ong D.E."/>
            <person name="Gordon J.I."/>
        </authorList>
    </citation>
    <scope>NUCLEOTIDE SEQUENCE [MRNA]</scope>
</reference>
<reference key="3">
    <citation type="journal article" date="1985" name="J. Biol. Chem.">
        <title>The primary structure of rat liver cellular retinol-binding protein.</title>
        <authorList>
            <person name="Sundelin J."/>
            <person name="Anundi H."/>
            <person name="Traegaardh L."/>
            <person name="Eriksson U."/>
            <person name="Lind P."/>
            <person name="Ronne H."/>
            <person name="Peterson P.A."/>
            <person name="Rask L."/>
        </authorList>
    </citation>
    <scope>PROTEIN SEQUENCE OF 2-135</scope>
    <source>
        <tissue>Liver</tissue>
    </source>
</reference>
<reference key="4">
    <citation type="journal article" date="1984" name="J. Biol. Chem.">
        <title>Cellular retinol-binding protein. Quantitation and distribution.</title>
        <authorList>
            <person name="Eriksson U."/>
            <person name="Das K."/>
            <person name="Busch C."/>
            <person name="Nordlinder H."/>
            <person name="Rask L."/>
            <person name="Sundelin J."/>
            <person name="Sallstrom J."/>
            <person name="Peterson P.A."/>
        </authorList>
    </citation>
    <scope>PROTEIN SEQUENCE OF 2-51</scope>
    <source>
        <tissue>Testis</tissue>
    </source>
</reference>
<reference key="5">
    <citation type="journal article" date="1981" name="Ann. N. Y. Acad. Sci.">
        <title>Structural and functional studies of vitamin A-binding proteins.</title>
        <authorList>
            <person name="Rask L."/>
            <person name="Anundi H."/>
            <person name="Boehme J."/>
            <person name="Eriksson U."/>
            <person name="Ronne H."/>
            <person name="Sege K."/>
            <person name="Peterson P.A."/>
        </authorList>
    </citation>
    <scope>PROTEIN SEQUENCE OF 2-35</scope>
    <source>
        <tissue>Liver</tissue>
    </source>
</reference>
<reference key="6">
    <citation type="journal article" date="1993" name="J. Mol. Biol.">
        <title>Crystallographic studies on a family of cellular lipophilic transport proteins. Refinement of P2 myelin protein and the structure determination and refinement of cellular retinol-binding protein in complex with all-trans-retinol.</title>
        <authorList>
            <person name="Cowan S.W."/>
            <person name="Newcomer M.E."/>
            <person name="Jones T.A."/>
        </authorList>
    </citation>
    <scope>X-RAY CRYSTALLOGRAPHY (2.1 ANGSTROMS) IN COMPLEX WITH ALL-TRANS-RETINOL</scope>
    <scope>FUNCTION</scope>
    <scope>DOMAIN</scope>
</reference>
<reference evidence="10 11" key="7">
    <citation type="journal article" date="2002" name="J. Biol. Chem.">
        <title>Structure and backbone dynamics of Apo- and holo-cellular retinol-binding protein in solution.</title>
        <authorList>
            <person name="Franzoni L."/>
            <person name="Lucke C."/>
            <person name="Perez C."/>
            <person name="Cavazzini D."/>
            <person name="Rademacher M."/>
            <person name="Ludwig C."/>
            <person name="Spisni A."/>
            <person name="Rossi G.L."/>
            <person name="Ruterjans H."/>
        </authorList>
    </citation>
    <scope>STRUCTURE BY NMR</scope>
</reference>
<reference evidence="12 13" key="8">
    <citation type="journal article" date="2003" name="J. Mol. Biol.">
        <title>Two homologous rat cellular retinol-binding proteins differ in local conformational flexibility.</title>
        <authorList>
            <person name="Lu J."/>
            <person name="Cistola D.P."/>
            <person name="Li E."/>
        </authorList>
    </citation>
    <scope>STRUCTURE BY NMR IN COMPLEX WITH RETINOL</scope>
    <scope>FUNCTION</scope>
    <scope>DOMAIN</scope>
</reference>
<gene>
    <name type="primary">Rbp1</name>
    <name type="synonym">Rbp-1</name>
</gene>
<feature type="initiator methionine" description="Removed" evidence="4 5 6">
    <location>
        <position position="1"/>
    </location>
</feature>
<feature type="chain" id="PRO_0000067394" description="Retinol-binding protein 1">
    <location>
        <begin position="2"/>
        <end position="135"/>
    </location>
</feature>
<feature type="region of interest" description="Important for interaction with STRA6" evidence="1">
    <location>
        <begin position="22"/>
        <end position="32"/>
    </location>
</feature>
<feature type="binding site" evidence="1">
    <location>
        <position position="41"/>
    </location>
    <ligand>
        <name>all-trans-retinol</name>
        <dbReference type="ChEBI" id="CHEBI:17336"/>
    </ligand>
</feature>
<feature type="binding site" evidence="13">
    <location>
        <position position="63"/>
    </location>
    <ligand>
        <name>all-trans-retinol</name>
        <dbReference type="ChEBI" id="CHEBI:17336"/>
    </ligand>
</feature>
<feature type="binding site" evidence="9">
    <location>
        <position position="109"/>
    </location>
    <ligand>
        <name>all-trans-retinol</name>
        <dbReference type="ChEBI" id="CHEBI:17336"/>
    </ligand>
</feature>
<feature type="strand" evidence="14">
    <location>
        <begin position="7"/>
        <end position="16"/>
    </location>
</feature>
<feature type="helix" evidence="14">
    <location>
        <begin position="17"/>
        <end position="22"/>
    </location>
</feature>
<feature type="turn" evidence="14">
    <location>
        <begin position="23"/>
        <end position="25"/>
    </location>
</feature>
<feature type="helix" evidence="14">
    <location>
        <begin position="28"/>
        <end position="36"/>
    </location>
</feature>
<feature type="strand" evidence="14">
    <location>
        <begin position="40"/>
        <end position="46"/>
    </location>
</feature>
<feature type="strand" evidence="14">
    <location>
        <begin position="49"/>
        <end position="55"/>
    </location>
</feature>
<feature type="strand" evidence="15">
    <location>
        <begin position="57"/>
        <end position="59"/>
    </location>
</feature>
<feature type="strand" evidence="14">
    <location>
        <begin position="61"/>
        <end position="66"/>
    </location>
</feature>
<feature type="strand" evidence="14">
    <location>
        <begin position="71"/>
        <end position="74"/>
    </location>
</feature>
<feature type="turn" evidence="14">
    <location>
        <begin position="76"/>
        <end position="79"/>
    </location>
</feature>
<feature type="strand" evidence="14">
    <location>
        <begin position="82"/>
        <end position="90"/>
    </location>
</feature>
<feature type="strand" evidence="14">
    <location>
        <begin position="93"/>
        <end position="102"/>
    </location>
</feature>
<feature type="strand" evidence="14">
    <location>
        <begin position="106"/>
        <end position="112"/>
    </location>
</feature>
<feature type="strand" evidence="14">
    <location>
        <begin position="115"/>
        <end position="122"/>
    </location>
</feature>
<feature type="strand" evidence="14">
    <location>
        <begin position="125"/>
        <end position="133"/>
    </location>
</feature>
<sequence>MPVDFNGYWKMLSNENFEEYLRALDVNVALRKIANLLKPDKEIVQDGDHMIIRTLSTFRNYIMDFQVGKEFEEDLTGIDDRKCMTTVSWDGDKLQCVQKGEKEGRGWTQWIEGDELHLEMRAEGVTCKQVFKKVH</sequence>
<name>RET1_RAT</name>
<evidence type="ECO:0000250" key="1">
    <source>
        <dbReference type="UniProtKB" id="P09455"/>
    </source>
</evidence>
<evidence type="ECO:0000250" key="2">
    <source>
        <dbReference type="UniProtKB" id="Q00915"/>
    </source>
</evidence>
<evidence type="ECO:0000269" key="3">
    <source>
    </source>
</evidence>
<evidence type="ECO:0000269" key="4">
    <source>
    </source>
</evidence>
<evidence type="ECO:0000269" key="5">
    <source>
    </source>
</evidence>
<evidence type="ECO:0000269" key="6">
    <source>
    </source>
</evidence>
<evidence type="ECO:0000269" key="7">
    <source>
    </source>
</evidence>
<evidence type="ECO:0000305" key="8"/>
<evidence type="ECO:0007744" key="9">
    <source>
        <dbReference type="PDB" id="1CRB"/>
    </source>
</evidence>
<evidence type="ECO:0007744" key="10">
    <source>
        <dbReference type="PDB" id="1JBH"/>
    </source>
</evidence>
<evidence type="ECO:0007744" key="11">
    <source>
        <dbReference type="PDB" id="1KGL"/>
    </source>
</evidence>
<evidence type="ECO:0007744" key="12">
    <source>
        <dbReference type="PDB" id="1MX7"/>
    </source>
</evidence>
<evidence type="ECO:0007744" key="13">
    <source>
        <dbReference type="PDB" id="1MX8"/>
    </source>
</evidence>
<evidence type="ECO:0007829" key="14">
    <source>
        <dbReference type="PDB" id="1CRB"/>
    </source>
</evidence>
<evidence type="ECO:0007829" key="15">
    <source>
        <dbReference type="PDB" id="1MX7"/>
    </source>
</evidence>